<organism>
    <name type="scientific">Sinorhizobium fredii (strain NBRC 101917 / NGR234)</name>
    <dbReference type="NCBI Taxonomy" id="394"/>
    <lineage>
        <taxon>Bacteria</taxon>
        <taxon>Pseudomonadati</taxon>
        <taxon>Pseudomonadota</taxon>
        <taxon>Alphaproteobacteria</taxon>
        <taxon>Hyphomicrobiales</taxon>
        <taxon>Rhizobiaceae</taxon>
        <taxon>Sinorhizobium/Ensifer group</taxon>
        <taxon>Sinorhizobium</taxon>
    </lineage>
</organism>
<accession>P55565</accession>
<geneLocation type="plasmid">
    <name>sym pNGR234a</name>
</geneLocation>
<name>Y4MF_SINFN</name>
<proteinExistence type="predicted"/>
<gene>
    <name type="ordered locus">NGR_a02530</name>
    <name type="ORF">y4mF</name>
</gene>
<keyword id="KW-0238">DNA-binding</keyword>
<keyword id="KW-0614">Plasmid</keyword>
<keyword id="KW-1185">Reference proteome</keyword>
<keyword id="KW-0804">Transcription</keyword>
<keyword id="KW-0805">Transcription regulation</keyword>
<evidence type="ECO:0000255" key="1">
    <source>
        <dbReference type="PROSITE-ProRule" id="PRU00257"/>
    </source>
</evidence>
<dbReference type="EMBL" id="U00090">
    <property type="protein sequence ID" value="AAB91769.1"/>
    <property type="molecule type" value="Genomic_DNA"/>
</dbReference>
<dbReference type="RefSeq" id="NP_443972.1">
    <property type="nucleotide sequence ID" value="NC_000914.2"/>
</dbReference>
<dbReference type="RefSeq" id="WP_010875278.1">
    <property type="nucleotide sequence ID" value="NC_000914.2"/>
</dbReference>
<dbReference type="SMR" id="P55565"/>
<dbReference type="KEGG" id="rhi:NGR_a02530"/>
<dbReference type="eggNOG" id="COG1396">
    <property type="taxonomic scope" value="Bacteria"/>
</dbReference>
<dbReference type="HOGENOM" id="CLU_066192_47_3_5"/>
<dbReference type="OrthoDB" id="7361823at2"/>
<dbReference type="Proteomes" id="UP000001054">
    <property type="component" value="Plasmid pNGR234a"/>
</dbReference>
<dbReference type="GO" id="GO:0003677">
    <property type="term" value="F:DNA binding"/>
    <property type="evidence" value="ECO:0007669"/>
    <property type="project" value="UniProtKB-KW"/>
</dbReference>
<dbReference type="CDD" id="cd00093">
    <property type="entry name" value="HTH_XRE"/>
    <property type="match status" value="1"/>
</dbReference>
<dbReference type="Gene3D" id="1.10.260.40">
    <property type="entry name" value="lambda repressor-like DNA-binding domains"/>
    <property type="match status" value="1"/>
</dbReference>
<dbReference type="InterPro" id="IPR001387">
    <property type="entry name" value="Cro/C1-type_HTH"/>
</dbReference>
<dbReference type="InterPro" id="IPR010982">
    <property type="entry name" value="Lambda_DNA-bd_dom_sf"/>
</dbReference>
<dbReference type="InterPro" id="IPR017507">
    <property type="entry name" value="Tscrpt_reg_HipB-like"/>
</dbReference>
<dbReference type="NCBIfam" id="TIGR03070">
    <property type="entry name" value="couple_hipB"/>
    <property type="match status" value="1"/>
</dbReference>
<dbReference type="Pfam" id="PF01381">
    <property type="entry name" value="HTH_3"/>
    <property type="match status" value="1"/>
</dbReference>
<dbReference type="SMART" id="SM00530">
    <property type="entry name" value="HTH_XRE"/>
    <property type="match status" value="1"/>
</dbReference>
<dbReference type="SUPFAM" id="SSF47413">
    <property type="entry name" value="lambda repressor-like DNA-binding domains"/>
    <property type="match status" value="1"/>
</dbReference>
<dbReference type="PROSITE" id="PS50943">
    <property type="entry name" value="HTH_CROC1"/>
    <property type="match status" value="1"/>
</dbReference>
<reference key="1">
    <citation type="journal article" date="1997" name="Nature">
        <title>Molecular basis of symbiosis between Rhizobium and legumes.</title>
        <authorList>
            <person name="Freiberg C.A."/>
            <person name="Fellay R."/>
            <person name="Bairoch A."/>
            <person name="Broughton W.J."/>
            <person name="Rosenthal A."/>
            <person name="Perret X."/>
        </authorList>
    </citation>
    <scope>NUCLEOTIDE SEQUENCE [LARGE SCALE GENOMIC DNA]</scope>
    <source>
        <strain>NBRC 101917 / NGR234</strain>
    </source>
</reference>
<reference key="2">
    <citation type="journal article" date="2009" name="Appl. Environ. Microbiol.">
        <title>Rhizobium sp. strain NGR234 possesses a remarkable number of secretion systems.</title>
        <authorList>
            <person name="Schmeisser C."/>
            <person name="Liesegang H."/>
            <person name="Krysciak D."/>
            <person name="Bakkou N."/>
            <person name="Le Quere A."/>
            <person name="Wollherr A."/>
            <person name="Heinemeyer I."/>
            <person name="Morgenstern B."/>
            <person name="Pommerening-Roeser A."/>
            <person name="Flores M."/>
            <person name="Palacios R."/>
            <person name="Brenner S."/>
            <person name="Gottschalk G."/>
            <person name="Schmitz R.A."/>
            <person name="Broughton W.J."/>
            <person name="Perret X."/>
            <person name="Strittmatter A.W."/>
            <person name="Streit W.R."/>
        </authorList>
    </citation>
    <scope>NUCLEOTIDE SEQUENCE [LARGE SCALE GENOMIC DNA]</scope>
    <source>
        <strain>NBRC 101917 / NGR234</strain>
    </source>
</reference>
<sequence>MAKRIKTPADIGALVRIVRKEQNLRQDELAGVAGVGLRFIVDLEAGKPTAQIGKVLQVLQTLGCSIDILAPGERRK</sequence>
<feature type="chain" id="PRO_0000149778" description="Uncharacterized HTH-type transcriptional regulator y4mF">
    <location>
        <begin position="1"/>
        <end position="76"/>
    </location>
</feature>
<feature type="domain" description="HTH cro/C1-type" evidence="1">
    <location>
        <begin position="15"/>
        <end position="69"/>
    </location>
</feature>
<feature type="DNA-binding region" description="H-T-H motif" evidence="1">
    <location>
        <begin position="26"/>
        <end position="45"/>
    </location>
</feature>
<protein>
    <recommendedName>
        <fullName>Uncharacterized HTH-type transcriptional regulator y4mF</fullName>
    </recommendedName>
</protein>